<name>Y4073_PSEAB</name>
<keyword id="KW-0004">4Fe-4S</keyword>
<keyword id="KW-0963">Cytoplasm</keyword>
<keyword id="KW-1015">Disulfide bond</keyword>
<keyword id="KW-0408">Iron</keyword>
<keyword id="KW-0411">Iron-sulfur</keyword>
<keyword id="KW-0479">Metal-binding</keyword>
<keyword id="KW-0489">Methyltransferase</keyword>
<keyword id="KW-0949">S-adenosyl-L-methionine</keyword>
<keyword id="KW-0808">Transferase</keyword>
<evidence type="ECO:0000250" key="1"/>
<evidence type="ECO:0000255" key="2"/>
<evidence type="ECO:0000255" key="3">
    <source>
        <dbReference type="PROSITE-ProRule" id="PRU01266"/>
    </source>
</evidence>
<evidence type="ECO:0000305" key="4"/>
<organism>
    <name type="scientific">Pseudomonas aeruginosa (strain UCBPP-PA14)</name>
    <dbReference type="NCBI Taxonomy" id="208963"/>
    <lineage>
        <taxon>Bacteria</taxon>
        <taxon>Pseudomonadati</taxon>
        <taxon>Pseudomonadota</taxon>
        <taxon>Gammaproteobacteria</taxon>
        <taxon>Pseudomonadales</taxon>
        <taxon>Pseudomonadaceae</taxon>
        <taxon>Pseudomonas</taxon>
    </lineage>
</organism>
<gene>
    <name type="ordered locus">PA14_40730</name>
</gene>
<dbReference type="EC" id="2.1.1.-"/>
<dbReference type="EMBL" id="CP000438">
    <property type="protein sequence ID" value="ABJ11027.1"/>
    <property type="molecule type" value="Genomic_DNA"/>
</dbReference>
<dbReference type="RefSeq" id="WP_003139921.1">
    <property type="nucleotide sequence ID" value="NZ_CP034244.1"/>
</dbReference>
<dbReference type="SMR" id="Q02KY4"/>
<dbReference type="KEGG" id="pau:PA14_40730"/>
<dbReference type="PseudoCAP" id="PA14_40730"/>
<dbReference type="HOGENOM" id="CLU_029101_3_3_6"/>
<dbReference type="BioCyc" id="PAER208963:G1G74-3412-MONOMER"/>
<dbReference type="Proteomes" id="UP000000653">
    <property type="component" value="Chromosome"/>
</dbReference>
<dbReference type="GO" id="GO:0005737">
    <property type="term" value="C:cytoplasm"/>
    <property type="evidence" value="ECO:0007669"/>
    <property type="project" value="UniProtKB-SubCell"/>
</dbReference>
<dbReference type="GO" id="GO:0051539">
    <property type="term" value="F:4 iron, 4 sulfur cluster binding"/>
    <property type="evidence" value="ECO:0007669"/>
    <property type="project" value="UniProtKB-KW"/>
</dbReference>
<dbReference type="GO" id="GO:0046872">
    <property type="term" value="F:metal ion binding"/>
    <property type="evidence" value="ECO:0007669"/>
    <property type="project" value="UniProtKB-KW"/>
</dbReference>
<dbReference type="GO" id="GO:0008173">
    <property type="term" value="F:RNA methyltransferase activity"/>
    <property type="evidence" value="ECO:0007669"/>
    <property type="project" value="InterPro"/>
</dbReference>
<dbReference type="GO" id="GO:0070475">
    <property type="term" value="P:rRNA base methylation"/>
    <property type="evidence" value="ECO:0007669"/>
    <property type="project" value="TreeGrafter"/>
</dbReference>
<dbReference type="GO" id="GO:0030488">
    <property type="term" value="P:tRNA methylation"/>
    <property type="evidence" value="ECO:0007669"/>
    <property type="project" value="TreeGrafter"/>
</dbReference>
<dbReference type="CDD" id="cd01335">
    <property type="entry name" value="Radical_SAM"/>
    <property type="match status" value="1"/>
</dbReference>
<dbReference type="FunFam" id="3.20.20.70:FF:000315">
    <property type="entry name" value="Probable RNA methyltransferase PA14_40730"/>
    <property type="match status" value="1"/>
</dbReference>
<dbReference type="Gene3D" id="3.20.20.70">
    <property type="entry name" value="Aldolase class I"/>
    <property type="match status" value="1"/>
</dbReference>
<dbReference type="InterPro" id="IPR013785">
    <property type="entry name" value="Aldolase_TIM"/>
</dbReference>
<dbReference type="InterPro" id="IPR040072">
    <property type="entry name" value="Methyltransferase_A"/>
</dbReference>
<dbReference type="InterPro" id="IPR004383">
    <property type="entry name" value="rRNA_lsu_MTrfase_RlmN/Cfr"/>
</dbReference>
<dbReference type="InterPro" id="IPR007197">
    <property type="entry name" value="rSAM"/>
</dbReference>
<dbReference type="NCBIfam" id="NF011034">
    <property type="entry name" value="PRK14464.1"/>
    <property type="match status" value="1"/>
</dbReference>
<dbReference type="PANTHER" id="PTHR30544">
    <property type="entry name" value="23S RRNA METHYLTRANSFERASE"/>
    <property type="match status" value="1"/>
</dbReference>
<dbReference type="PANTHER" id="PTHR30544:SF5">
    <property type="entry name" value="RADICAL SAM CORE DOMAIN-CONTAINING PROTEIN"/>
    <property type="match status" value="1"/>
</dbReference>
<dbReference type="Pfam" id="PF04055">
    <property type="entry name" value="Radical_SAM"/>
    <property type="match status" value="1"/>
</dbReference>
<dbReference type="PIRSF" id="PIRSF006004">
    <property type="entry name" value="CHP00048"/>
    <property type="match status" value="1"/>
</dbReference>
<dbReference type="SFLD" id="SFLDF00275">
    <property type="entry name" value="adenosine_C2_methyltransferase"/>
    <property type="match status" value="1"/>
</dbReference>
<dbReference type="SFLD" id="SFLDG01062">
    <property type="entry name" value="methyltransferase_(Class_A)"/>
    <property type="match status" value="1"/>
</dbReference>
<dbReference type="SUPFAM" id="SSF102114">
    <property type="entry name" value="Radical SAM enzymes"/>
    <property type="match status" value="1"/>
</dbReference>
<dbReference type="PROSITE" id="PS51918">
    <property type="entry name" value="RADICAL_SAM"/>
    <property type="match status" value="1"/>
</dbReference>
<comment type="cofactor">
    <cofactor evidence="1">
        <name>[4Fe-4S] cluster</name>
        <dbReference type="ChEBI" id="CHEBI:49883"/>
    </cofactor>
    <text evidence="1">Binds 1 [4Fe-4S] cluster. The cluster is coordinated with 3 cysteines and an exchangeable S-adenosyl-L-methionine.</text>
</comment>
<comment type="subcellular location">
    <subcellularLocation>
        <location evidence="4">Cytoplasm</location>
    </subcellularLocation>
</comment>
<comment type="similarity">
    <text evidence="4">Belongs to the radical SAM superfamily. RlmN family.</text>
</comment>
<sequence>MRSQDLHQRLADLGAKPLHCGRIVRAWLQGRALDACTARQPAEDFLPLGVRHGLPQVAAELEGIARLHSEHPASDGSSRLLVELADRQMVESVLLPRGGLCVSTQVGCAVGCVFCMTGRSGLLRQVGSLEMVAQVVLARRRRAVKKVVFMGMGEPAHNLDNVLEAIDLLGTDGGIGHKNLVFSTVGDPRVFERLPLQRVKPALALSLHSTRAELRRQLLPKAPPLSPEELVEAGEAYARRVDYPIQYQWTLLEGINDSLEEMDGILRLLKGRFAVMNLIPYNSMDGDAYRRPSGERIVELVRYLHSRGVLTKVRNSAGQDIDGGCGQLRARATQGTAERRIPARQA</sequence>
<proteinExistence type="inferred from homology"/>
<feature type="chain" id="PRO_0000350334" description="Probable RNA methyltransferase PA14_40730">
    <location>
        <begin position="1"/>
        <end position="346"/>
    </location>
</feature>
<feature type="domain" description="Radical SAM core" evidence="3">
    <location>
        <begin position="94"/>
        <end position="320"/>
    </location>
</feature>
<feature type="active site" description="Proton acceptor" evidence="2">
    <location>
        <position position="91"/>
    </location>
</feature>
<feature type="active site" description="S-methylcysteine intermediate" evidence="1">
    <location>
        <position position="325"/>
    </location>
</feature>
<feature type="binding site" evidence="1">
    <location>
        <position position="108"/>
    </location>
    <ligand>
        <name>[4Fe-4S] cluster</name>
        <dbReference type="ChEBI" id="CHEBI:49883"/>
        <note>4Fe-4S-S-AdoMet</note>
    </ligand>
</feature>
<feature type="binding site" evidence="1">
    <location>
        <position position="112"/>
    </location>
    <ligand>
        <name>[4Fe-4S] cluster</name>
        <dbReference type="ChEBI" id="CHEBI:49883"/>
        <note>4Fe-4S-S-AdoMet</note>
    </ligand>
</feature>
<feature type="binding site" evidence="1">
    <location>
        <position position="115"/>
    </location>
    <ligand>
        <name>[4Fe-4S] cluster</name>
        <dbReference type="ChEBI" id="CHEBI:49883"/>
        <note>4Fe-4S-S-AdoMet</note>
    </ligand>
</feature>
<feature type="binding site" evidence="1">
    <location>
        <begin position="153"/>
        <end position="154"/>
    </location>
    <ligand>
        <name>S-adenosyl-L-methionine</name>
        <dbReference type="ChEBI" id="CHEBI:59789"/>
    </ligand>
</feature>
<feature type="binding site" evidence="1">
    <location>
        <position position="183"/>
    </location>
    <ligand>
        <name>S-adenosyl-L-methionine</name>
        <dbReference type="ChEBI" id="CHEBI:59789"/>
    </ligand>
</feature>
<feature type="binding site" evidence="1">
    <location>
        <begin position="206"/>
        <end position="208"/>
    </location>
    <ligand>
        <name>S-adenosyl-L-methionine</name>
        <dbReference type="ChEBI" id="CHEBI:59789"/>
    </ligand>
</feature>
<feature type="binding site" evidence="1">
    <location>
        <position position="282"/>
    </location>
    <ligand>
        <name>S-adenosyl-L-methionine</name>
        <dbReference type="ChEBI" id="CHEBI:59789"/>
    </ligand>
</feature>
<feature type="disulfide bond" description="(transient)" evidence="1">
    <location>
        <begin position="101"/>
        <end position="325"/>
    </location>
</feature>
<accession>Q02KY4</accession>
<reference key="1">
    <citation type="journal article" date="2006" name="Genome Biol.">
        <title>Genomic analysis reveals that Pseudomonas aeruginosa virulence is combinatorial.</title>
        <authorList>
            <person name="Lee D.G."/>
            <person name="Urbach J.M."/>
            <person name="Wu G."/>
            <person name="Liberati N.T."/>
            <person name="Feinbaum R.L."/>
            <person name="Miyata S."/>
            <person name="Diggins L.T."/>
            <person name="He J."/>
            <person name="Saucier M."/>
            <person name="Deziel E."/>
            <person name="Friedman L."/>
            <person name="Li L."/>
            <person name="Grills G."/>
            <person name="Montgomery K."/>
            <person name="Kucherlapati R."/>
            <person name="Rahme L.G."/>
            <person name="Ausubel F.M."/>
        </authorList>
    </citation>
    <scope>NUCLEOTIDE SEQUENCE [LARGE SCALE GENOMIC DNA]</scope>
    <source>
        <strain>UCBPP-PA14</strain>
    </source>
</reference>
<protein>
    <recommendedName>
        <fullName>Probable RNA methyltransferase PA14_40730</fullName>
        <ecNumber>2.1.1.-</ecNumber>
    </recommendedName>
</protein>